<comment type="function">
    <text evidence="1">Promotes RNA polymerase assembly. Latches the N- and C-terminal regions of the beta' subunit thereby facilitating its interaction with the beta and alpha subunits.</text>
</comment>
<comment type="catalytic activity">
    <reaction evidence="1">
        <text>RNA(n) + a ribonucleoside 5'-triphosphate = RNA(n+1) + diphosphate</text>
        <dbReference type="Rhea" id="RHEA:21248"/>
        <dbReference type="Rhea" id="RHEA-COMP:14527"/>
        <dbReference type="Rhea" id="RHEA-COMP:17342"/>
        <dbReference type="ChEBI" id="CHEBI:33019"/>
        <dbReference type="ChEBI" id="CHEBI:61557"/>
        <dbReference type="ChEBI" id="CHEBI:140395"/>
        <dbReference type="EC" id="2.7.7.6"/>
    </reaction>
</comment>
<comment type="subunit">
    <text evidence="1">The RNAP catalytic core consists of 2 alpha, 1 beta, 1 beta' and 1 omega subunit. When a sigma factor is associated with the core the holoenzyme is formed, which can initiate transcription.</text>
</comment>
<comment type="similarity">
    <text evidence="1">Belongs to the RNA polymerase subunit omega family.</text>
</comment>
<organism>
    <name type="scientific">Clostridium botulinum (strain 657 / Type Ba4)</name>
    <dbReference type="NCBI Taxonomy" id="515621"/>
    <lineage>
        <taxon>Bacteria</taxon>
        <taxon>Bacillati</taxon>
        <taxon>Bacillota</taxon>
        <taxon>Clostridia</taxon>
        <taxon>Eubacteriales</taxon>
        <taxon>Clostridiaceae</taxon>
        <taxon>Clostridium</taxon>
    </lineage>
</organism>
<feature type="chain" id="PRO_1000205510" description="DNA-directed RNA polymerase subunit omega">
    <location>
        <begin position="1"/>
        <end position="72"/>
    </location>
</feature>
<gene>
    <name evidence="1" type="primary">rpoZ</name>
    <name type="ordered locus">CLJ_B2743</name>
</gene>
<evidence type="ECO:0000255" key="1">
    <source>
        <dbReference type="HAMAP-Rule" id="MF_00366"/>
    </source>
</evidence>
<keyword id="KW-0240">DNA-directed RNA polymerase</keyword>
<keyword id="KW-0548">Nucleotidyltransferase</keyword>
<keyword id="KW-0804">Transcription</keyword>
<keyword id="KW-0808">Transferase</keyword>
<dbReference type="EC" id="2.7.7.6" evidence="1"/>
<dbReference type="EMBL" id="CP001083">
    <property type="protein sequence ID" value="ACQ52966.1"/>
    <property type="molecule type" value="Genomic_DNA"/>
</dbReference>
<dbReference type="RefSeq" id="WP_003388622.1">
    <property type="nucleotide sequence ID" value="NC_012658.1"/>
</dbReference>
<dbReference type="SMR" id="C3L0L4"/>
<dbReference type="GeneID" id="92939254"/>
<dbReference type="KEGG" id="cbi:CLJ_B2743"/>
<dbReference type="HOGENOM" id="CLU_125406_6_1_9"/>
<dbReference type="Proteomes" id="UP000002333">
    <property type="component" value="Chromosome"/>
</dbReference>
<dbReference type="GO" id="GO:0000428">
    <property type="term" value="C:DNA-directed RNA polymerase complex"/>
    <property type="evidence" value="ECO:0007669"/>
    <property type="project" value="UniProtKB-KW"/>
</dbReference>
<dbReference type="GO" id="GO:0003677">
    <property type="term" value="F:DNA binding"/>
    <property type="evidence" value="ECO:0007669"/>
    <property type="project" value="UniProtKB-UniRule"/>
</dbReference>
<dbReference type="GO" id="GO:0003899">
    <property type="term" value="F:DNA-directed RNA polymerase activity"/>
    <property type="evidence" value="ECO:0007669"/>
    <property type="project" value="UniProtKB-UniRule"/>
</dbReference>
<dbReference type="GO" id="GO:0006351">
    <property type="term" value="P:DNA-templated transcription"/>
    <property type="evidence" value="ECO:0007669"/>
    <property type="project" value="UniProtKB-UniRule"/>
</dbReference>
<dbReference type="Gene3D" id="3.90.940.10">
    <property type="match status" value="1"/>
</dbReference>
<dbReference type="HAMAP" id="MF_00366">
    <property type="entry name" value="RNApol_bact_RpoZ"/>
    <property type="match status" value="1"/>
</dbReference>
<dbReference type="InterPro" id="IPR003716">
    <property type="entry name" value="DNA-dir_RNA_pol_omega"/>
</dbReference>
<dbReference type="InterPro" id="IPR006110">
    <property type="entry name" value="Pol_omega/Rpo6/RPB6"/>
</dbReference>
<dbReference type="InterPro" id="IPR036161">
    <property type="entry name" value="RPB6/omega-like_sf"/>
</dbReference>
<dbReference type="NCBIfam" id="TIGR00690">
    <property type="entry name" value="rpoZ"/>
    <property type="match status" value="1"/>
</dbReference>
<dbReference type="PANTHER" id="PTHR34476">
    <property type="entry name" value="DNA-DIRECTED RNA POLYMERASE SUBUNIT OMEGA"/>
    <property type="match status" value="1"/>
</dbReference>
<dbReference type="PANTHER" id="PTHR34476:SF1">
    <property type="entry name" value="DNA-DIRECTED RNA POLYMERASE SUBUNIT OMEGA"/>
    <property type="match status" value="1"/>
</dbReference>
<dbReference type="Pfam" id="PF01192">
    <property type="entry name" value="RNA_pol_Rpb6"/>
    <property type="match status" value="1"/>
</dbReference>
<dbReference type="SMART" id="SM01409">
    <property type="entry name" value="RNA_pol_Rpb6"/>
    <property type="match status" value="1"/>
</dbReference>
<dbReference type="SUPFAM" id="SSF63562">
    <property type="entry name" value="RPB6/omega subunit-like"/>
    <property type="match status" value="1"/>
</dbReference>
<accession>C3L0L4</accession>
<protein>
    <recommendedName>
        <fullName evidence="1">DNA-directed RNA polymerase subunit omega</fullName>
        <shortName evidence="1">RNAP omega subunit</shortName>
        <ecNumber evidence="1">2.7.7.6</ecNumber>
    </recommendedName>
    <alternativeName>
        <fullName evidence="1">RNA polymerase omega subunit</fullName>
    </alternativeName>
    <alternativeName>
        <fullName evidence="1">Transcriptase subunit omega</fullName>
    </alternativeName>
</protein>
<sequence length="72" mass="8013">MSNSMINPSIVNLLEKVDDRYSLVTITSKRSRQLIDGAKPLVDIDSTKPVTVAINEIHEGKITYKTVKEGIK</sequence>
<proteinExistence type="inferred from homology"/>
<reference key="1">
    <citation type="submission" date="2008-05" db="EMBL/GenBank/DDBJ databases">
        <title>Genome sequence of Clostridium botulinum Ba4 strain 657.</title>
        <authorList>
            <person name="Shrivastava S."/>
            <person name="Brown J.L."/>
            <person name="Bruce D."/>
            <person name="Detter C."/>
            <person name="Munk C."/>
            <person name="Smith L.A."/>
            <person name="Smith T.J."/>
            <person name="Sutton G."/>
            <person name="Brettin T.S."/>
        </authorList>
    </citation>
    <scope>NUCLEOTIDE SEQUENCE [LARGE SCALE GENOMIC DNA]</scope>
    <source>
        <strain>657 / Type Ba4</strain>
    </source>
</reference>
<name>RPOZ_CLOB6</name>